<keyword id="KW-0903">Direct protein sequencing</keyword>
<keyword id="KW-1015">Disulfide bond</keyword>
<keyword id="KW-0372">Hormone</keyword>
<keyword id="KW-0479">Metal-binding</keyword>
<keyword id="KW-0964">Secreted</keyword>
<keyword id="KW-0732">Signal</keyword>
<keyword id="KW-0862">Zinc</keyword>
<gene>
    <name type="primary">gh</name>
</gene>
<feature type="signal peptide" evidence="2">
    <location>
        <begin position="1"/>
        <end position="22"/>
    </location>
</feature>
<feature type="chain" id="PRO_0000033027" description="Somatotropin">
    <location>
        <begin position="23"/>
        <end position="200"/>
    </location>
</feature>
<feature type="binding site" evidence="1">
    <location>
        <position position="38"/>
    </location>
    <ligand>
        <name>Zn(2+)</name>
        <dbReference type="ChEBI" id="CHEBI:29105"/>
    </ligand>
</feature>
<feature type="binding site" evidence="1">
    <location>
        <position position="182"/>
    </location>
    <ligand>
        <name>Zn(2+)</name>
        <dbReference type="ChEBI" id="CHEBI:29105"/>
    </ligand>
</feature>
<feature type="disulfide bond" evidence="1">
    <location>
        <begin position="71"/>
        <end position="173"/>
    </location>
</feature>
<feature type="disulfide bond" evidence="1">
    <location>
        <begin position="190"/>
        <end position="198"/>
    </location>
</feature>
<feature type="sequence conflict" description="In Ref. 3; AA sequence." evidence="3" ref="3">
    <original>N</original>
    <variation>E</variation>
    <location>
        <position position="145"/>
    </location>
</feature>
<name>SOMA_ICTPU</name>
<proteinExistence type="evidence at protein level"/>
<protein>
    <recommendedName>
        <fullName>Somatotropin</fullName>
    </recommendedName>
    <alternativeName>
        <fullName>Growth hormone</fullName>
    </alternativeName>
</protein>
<accession>P34745</accession>
<evidence type="ECO:0000250" key="1"/>
<evidence type="ECO:0000269" key="2">
    <source>
    </source>
</evidence>
<evidence type="ECO:0000305" key="3"/>
<dbReference type="EMBL" id="S69215">
    <property type="protein sequence ID" value="AAC60745.1"/>
    <property type="molecule type" value="Genomic_DNA"/>
</dbReference>
<dbReference type="EMBL" id="AF267989">
    <property type="protein sequence ID" value="AAF78944.1"/>
    <property type="molecule type" value="Genomic_DNA"/>
</dbReference>
<dbReference type="SMR" id="P34745"/>
<dbReference type="STRING" id="7998.ENSIPUP00000027839"/>
<dbReference type="Ensembl" id="ENSIPUT00015002111">
    <property type="protein sequence ID" value="ENSIPUP00015001650"/>
    <property type="gene ID" value="ENSIPUG00015000997"/>
</dbReference>
<dbReference type="OMA" id="VAYCYSE"/>
<dbReference type="Proteomes" id="UP000221080">
    <property type="component" value="Unplaced"/>
</dbReference>
<dbReference type="GO" id="GO:0005615">
    <property type="term" value="C:extracellular space"/>
    <property type="evidence" value="ECO:0000314"/>
    <property type="project" value="AgBase"/>
</dbReference>
<dbReference type="GO" id="GO:0070186">
    <property type="term" value="F:growth hormone activity"/>
    <property type="evidence" value="ECO:0007669"/>
    <property type="project" value="TreeGrafter"/>
</dbReference>
<dbReference type="GO" id="GO:0005131">
    <property type="term" value="F:growth hormone receptor binding"/>
    <property type="evidence" value="ECO:0007669"/>
    <property type="project" value="InterPro"/>
</dbReference>
<dbReference type="GO" id="GO:0046872">
    <property type="term" value="F:metal ion binding"/>
    <property type="evidence" value="ECO:0007669"/>
    <property type="project" value="UniProtKB-KW"/>
</dbReference>
<dbReference type="GO" id="GO:0048513">
    <property type="term" value="P:animal organ development"/>
    <property type="evidence" value="ECO:0007669"/>
    <property type="project" value="TreeGrafter"/>
</dbReference>
<dbReference type="GO" id="GO:0060396">
    <property type="term" value="P:growth hormone receptor signaling pathway"/>
    <property type="evidence" value="ECO:0007669"/>
    <property type="project" value="TreeGrafter"/>
</dbReference>
<dbReference type="GO" id="GO:0042538">
    <property type="term" value="P:hyperosmotic salinity response"/>
    <property type="evidence" value="ECO:0000314"/>
    <property type="project" value="AgBase"/>
</dbReference>
<dbReference type="GO" id="GO:0045927">
    <property type="term" value="P:positive regulation of growth"/>
    <property type="evidence" value="ECO:0007669"/>
    <property type="project" value="TreeGrafter"/>
</dbReference>
<dbReference type="GO" id="GO:0046427">
    <property type="term" value="P:positive regulation of receptor signaling pathway via JAK-STAT"/>
    <property type="evidence" value="ECO:0007669"/>
    <property type="project" value="TreeGrafter"/>
</dbReference>
<dbReference type="GO" id="GO:1903576">
    <property type="term" value="P:response to L-arginine"/>
    <property type="evidence" value="ECO:0000314"/>
    <property type="project" value="AgBase"/>
</dbReference>
<dbReference type="GO" id="GO:0043434">
    <property type="term" value="P:response to peptide hormone"/>
    <property type="evidence" value="ECO:0000314"/>
    <property type="project" value="AgBase"/>
</dbReference>
<dbReference type="GO" id="GO:0042594">
    <property type="term" value="P:response to starvation"/>
    <property type="evidence" value="ECO:0000314"/>
    <property type="project" value="AgBase"/>
</dbReference>
<dbReference type="CDD" id="cd10285">
    <property type="entry name" value="somatotropin_like"/>
    <property type="match status" value="1"/>
</dbReference>
<dbReference type="FunFam" id="1.20.1250.10:FF:000009">
    <property type="entry name" value="Growth hormone"/>
    <property type="match status" value="1"/>
</dbReference>
<dbReference type="Gene3D" id="1.20.1250.10">
    <property type="match status" value="1"/>
</dbReference>
<dbReference type="InterPro" id="IPR009079">
    <property type="entry name" value="4_helix_cytokine-like_core"/>
</dbReference>
<dbReference type="InterPro" id="IPR034975">
    <property type="entry name" value="Somatotropin"/>
</dbReference>
<dbReference type="InterPro" id="IPR001400">
    <property type="entry name" value="Somatotropin/Prolactin"/>
</dbReference>
<dbReference type="InterPro" id="IPR018116">
    <property type="entry name" value="Somatotropin_CS"/>
</dbReference>
<dbReference type="PANTHER" id="PTHR11417:SF2">
    <property type="entry name" value="SOMATOTROPIN"/>
    <property type="match status" value="1"/>
</dbReference>
<dbReference type="PANTHER" id="PTHR11417">
    <property type="entry name" value="SOMATOTROPIN,PROLACTIN"/>
    <property type="match status" value="1"/>
</dbReference>
<dbReference type="Pfam" id="PF00103">
    <property type="entry name" value="Hormone_1"/>
    <property type="match status" value="1"/>
</dbReference>
<dbReference type="PRINTS" id="PR00836">
    <property type="entry name" value="SOMATOTROPIN"/>
</dbReference>
<dbReference type="SUPFAM" id="SSF47266">
    <property type="entry name" value="4-helical cytokines"/>
    <property type="match status" value="1"/>
</dbReference>
<dbReference type="PROSITE" id="PS00266">
    <property type="entry name" value="SOMATOTROPIN_1"/>
    <property type="match status" value="1"/>
</dbReference>
<dbReference type="PROSITE" id="PS00338">
    <property type="entry name" value="SOMATOTROPIN_2"/>
    <property type="match status" value="1"/>
</dbReference>
<comment type="function">
    <text>Growth hormone plays an important role in growth control and is involved in the regulation of several anabolic processes. Implicated as an osmoregulatory substance important for seawater adaptation.</text>
</comment>
<comment type="subcellular location">
    <subcellularLocation>
        <location>Secreted</location>
    </subcellularLocation>
</comment>
<comment type="similarity">
    <text evidence="3">Belongs to the somatotropin/prolactin family.</text>
</comment>
<organism>
    <name type="scientific">Ictalurus punctatus</name>
    <name type="common">Channel catfish</name>
    <name type="synonym">Silurus punctatus</name>
    <dbReference type="NCBI Taxonomy" id="7998"/>
    <lineage>
        <taxon>Eukaryota</taxon>
        <taxon>Metazoa</taxon>
        <taxon>Chordata</taxon>
        <taxon>Craniata</taxon>
        <taxon>Vertebrata</taxon>
        <taxon>Euteleostomi</taxon>
        <taxon>Actinopterygii</taxon>
        <taxon>Neopterygii</taxon>
        <taxon>Teleostei</taxon>
        <taxon>Ostariophysi</taxon>
        <taxon>Siluriformes</taxon>
        <taxon>Ictaluridae</taxon>
        <taxon>Ictalurus</taxon>
    </lineage>
</organism>
<reference key="1">
    <citation type="journal article" date="1993" name="Mol. Mar. Biol. Biotechnol.">
        <title>Structure of the channel catfish (Ictalurus punctatus) growth hormone gene and its evolutionary implications.</title>
        <authorList>
            <person name="Tang Y."/>
            <person name="Lin C.M."/>
            <person name="Chen T.T."/>
            <person name="Kawauchi H."/>
            <person name="Dunham R.A."/>
            <person name="Powers D.A."/>
        </authorList>
    </citation>
    <scope>NUCLEOTIDE SEQUENCE [GENOMIC DNA]</scope>
    <source>
        <tissue>Pituitary</tissue>
    </source>
</reference>
<reference key="2">
    <citation type="submission" date="2000-05" db="EMBL/GenBank/DDBJ databases">
        <authorList>
            <person name="Chen T.T."/>
        </authorList>
    </citation>
    <scope>NUCLEOTIDE SEQUENCE [GENOMIC DNA]</scope>
</reference>
<reference key="3">
    <citation type="journal article" date="1992" name="Mol. Mar. Biol. Biotechnol.">
        <title>Chemical identification of catfish growth hormone and prolactin.</title>
        <authorList>
            <person name="Watanabe K."/>
            <person name="Igarashi A."/>
            <person name="Noso T."/>
            <person name="Chen T.T."/>
            <person name="Dunham R.A."/>
            <person name="Kawauchi H."/>
        </authorList>
    </citation>
    <scope>PROTEIN SEQUENCE OF 23-200</scope>
    <source>
        <tissue>Pituitary</tissue>
    </source>
</reference>
<sequence>MARVLVLLSVVVASLLFSQGATFESQRLFNNAVIRVQHLHQLAAKMMDDFEEALLPEERKQLSKIFPLSFCNSDSIEAPAGKDEAQKSSVLKLLHTSYRLIESWEFPSRNLGNPNHISEKLADLKMGIGVLIEGCVDGQTGLDENDSLAPPFEDFYQTLSEGNLRKSFRLLSCFKKDMHKVETYLSVAKCRRSLDSNCTL</sequence>